<organism>
    <name type="scientific">Lactiplantibacillus plantarum (strain ATCC BAA-793 / NCIMB 8826 / WCFS1)</name>
    <name type="common">Lactobacillus plantarum</name>
    <dbReference type="NCBI Taxonomy" id="220668"/>
    <lineage>
        <taxon>Bacteria</taxon>
        <taxon>Bacillati</taxon>
        <taxon>Bacillota</taxon>
        <taxon>Bacilli</taxon>
        <taxon>Lactobacillales</taxon>
        <taxon>Lactobacillaceae</taxon>
        <taxon>Lactiplantibacillus</taxon>
    </lineage>
</organism>
<dbReference type="EMBL" id="AL935263">
    <property type="protein sequence ID" value="CCC79302.1"/>
    <property type="molecule type" value="Genomic_DNA"/>
</dbReference>
<dbReference type="RefSeq" id="WP_003640742.1">
    <property type="nucleotide sequence ID" value="NC_004567.2"/>
</dbReference>
<dbReference type="RefSeq" id="YP_004889816.1">
    <property type="nucleotide sequence ID" value="NC_004567.2"/>
</dbReference>
<dbReference type="SMR" id="Q88VJ1"/>
<dbReference type="STRING" id="220668.lp_2058"/>
<dbReference type="EnsemblBacteria" id="CCC79302">
    <property type="protein sequence ID" value="CCC79302"/>
    <property type="gene ID" value="lp_2058"/>
</dbReference>
<dbReference type="KEGG" id="lpl:lp_2058"/>
<dbReference type="PATRIC" id="fig|220668.9.peg.1743"/>
<dbReference type="eggNOG" id="COG2827">
    <property type="taxonomic scope" value="Bacteria"/>
</dbReference>
<dbReference type="HOGENOM" id="CLU_135650_0_3_9"/>
<dbReference type="OrthoDB" id="9807770at2"/>
<dbReference type="PhylomeDB" id="Q88VJ1"/>
<dbReference type="Proteomes" id="UP000000432">
    <property type="component" value="Chromosome"/>
</dbReference>
<dbReference type="CDD" id="cd10456">
    <property type="entry name" value="GIY-YIG_UPF0213"/>
    <property type="match status" value="1"/>
</dbReference>
<dbReference type="Gene3D" id="3.40.1440.10">
    <property type="entry name" value="GIY-YIG endonuclease"/>
    <property type="match status" value="1"/>
</dbReference>
<dbReference type="InterPro" id="IPR000305">
    <property type="entry name" value="GIY-YIG_endonuc"/>
</dbReference>
<dbReference type="InterPro" id="IPR035901">
    <property type="entry name" value="GIY-YIG_endonuc_sf"/>
</dbReference>
<dbReference type="InterPro" id="IPR050190">
    <property type="entry name" value="UPF0213_domain"/>
</dbReference>
<dbReference type="PANTHER" id="PTHR34477">
    <property type="entry name" value="UPF0213 PROTEIN YHBQ"/>
    <property type="match status" value="1"/>
</dbReference>
<dbReference type="PANTHER" id="PTHR34477:SF1">
    <property type="entry name" value="UPF0213 PROTEIN YHBQ"/>
    <property type="match status" value="1"/>
</dbReference>
<dbReference type="Pfam" id="PF01541">
    <property type="entry name" value="GIY-YIG"/>
    <property type="match status" value="1"/>
</dbReference>
<dbReference type="SUPFAM" id="SSF82771">
    <property type="entry name" value="GIY-YIG endonuclease"/>
    <property type="match status" value="1"/>
</dbReference>
<dbReference type="PROSITE" id="PS50164">
    <property type="entry name" value="GIY_YIG"/>
    <property type="match status" value="1"/>
</dbReference>
<evidence type="ECO:0000255" key="1">
    <source>
        <dbReference type="PROSITE-ProRule" id="PRU00977"/>
    </source>
</evidence>
<evidence type="ECO:0000305" key="2"/>
<keyword id="KW-1185">Reference proteome</keyword>
<protein>
    <recommendedName>
        <fullName>UPF0213 protein lp_2058</fullName>
    </recommendedName>
</protein>
<comment type="similarity">
    <text evidence="2">Belongs to the UPF0213 family.</text>
</comment>
<feature type="chain" id="PRO_0000161365" description="UPF0213 protein lp_2058">
    <location>
        <begin position="1"/>
        <end position="101"/>
    </location>
</feature>
<feature type="domain" description="GIY-YIG" evidence="1">
    <location>
        <begin position="15"/>
        <end position="92"/>
    </location>
</feature>
<accession>Q88VJ1</accession>
<accession>F9UQ13</accession>
<name>Y2058_LACPL</name>
<proteinExistence type="inferred from homology"/>
<reference key="1">
    <citation type="journal article" date="2003" name="Proc. Natl. Acad. Sci. U.S.A.">
        <title>Complete genome sequence of Lactobacillus plantarum WCFS1.</title>
        <authorList>
            <person name="Kleerebezem M."/>
            <person name="Boekhorst J."/>
            <person name="van Kranenburg R."/>
            <person name="Molenaar D."/>
            <person name="Kuipers O.P."/>
            <person name="Leer R."/>
            <person name="Tarchini R."/>
            <person name="Peters S.A."/>
            <person name="Sandbrink H.M."/>
            <person name="Fiers M.W.E.J."/>
            <person name="Stiekema W."/>
            <person name="Klein Lankhorst R.M."/>
            <person name="Bron P.A."/>
            <person name="Hoffer S.M."/>
            <person name="Nierop Groot M.N."/>
            <person name="Kerkhoven R."/>
            <person name="De Vries M."/>
            <person name="Ursing B."/>
            <person name="De Vos W.M."/>
            <person name="Siezen R.J."/>
        </authorList>
    </citation>
    <scope>NUCLEOTIDE SEQUENCE [LARGE SCALE GENOMIC DNA]</scope>
    <source>
        <strain>ATCC BAA-793 / NCIMB 8826 / WCFS1</strain>
    </source>
</reference>
<reference key="2">
    <citation type="journal article" date="2012" name="J. Bacteriol.">
        <title>Complete resequencing and reannotation of the Lactobacillus plantarum WCFS1 genome.</title>
        <authorList>
            <person name="Siezen R.J."/>
            <person name="Francke C."/>
            <person name="Renckens B."/>
            <person name="Boekhorst J."/>
            <person name="Wels M."/>
            <person name="Kleerebezem M."/>
            <person name="van Hijum S.A."/>
        </authorList>
    </citation>
    <scope>NUCLEOTIDE SEQUENCE [LARGE SCALE GENOMIC DNA]</scope>
    <scope>GENOME REANNOTATION</scope>
    <source>
        <strain>ATCC BAA-793 / NCIMB 8826 / WCFS1</strain>
    </source>
</reference>
<gene>
    <name type="ordered locus">lp_2058</name>
</gene>
<sequence>MASTSKPAASTTAIKKYYFYVLLCADQTLYGGFTDNLQRRLATHNAGKGAKYTRVRSRRPLQLIYHETFTDKSSALKAEYAFKHQSRAAKLKYLSAHDVKI</sequence>